<accession>Q7ZVK4</accession>
<name>VPS36_DANRE</name>
<evidence type="ECO:0000250" key="1"/>
<evidence type="ECO:0000250" key="2">
    <source>
        <dbReference type="UniProtKB" id="Q86VN1"/>
    </source>
</evidence>
<evidence type="ECO:0000255" key="3"/>
<evidence type="ECO:0000255" key="4">
    <source>
        <dbReference type="PROSITE-ProRule" id="PRU00828"/>
    </source>
</evidence>
<evidence type="ECO:0000305" key="5"/>
<keyword id="KW-0175">Coiled coil</keyword>
<keyword id="KW-0963">Cytoplasm</keyword>
<keyword id="KW-0967">Endosome</keyword>
<keyword id="KW-0653">Protein transport</keyword>
<keyword id="KW-1185">Reference proteome</keyword>
<keyword id="KW-0813">Transport</keyword>
<comment type="function">
    <text evidence="2">Component of the ESCRT-II complex (endosomal sorting complex required for transport II), which is required for multivesicular body (MVB) formation and sorting of endosomal cargo proteins into MVBs. The MVB pathway mediates delivery of transmembrane proteins into the lumen of the lysosome for degradation. The ESCRT-II complex is probably involved in the recruitment of the ESCRT-III complex.</text>
</comment>
<comment type="subunit">
    <text evidence="2">Component of the endosomal sorting complex required for transport II (ESCRT-II), composed of SNF8, VPS25 and VPS36.</text>
</comment>
<comment type="subcellular location">
    <subcellularLocation>
        <location evidence="1">Cytoplasm</location>
    </subcellularLocation>
    <subcellularLocation>
        <location evidence="1">Endosome</location>
    </subcellularLocation>
</comment>
<comment type="similarity">
    <text evidence="5">Belongs to the VPS36 family.</text>
</comment>
<proteinExistence type="evidence at transcript level"/>
<dbReference type="EMBL" id="BC045509">
    <property type="protein sequence ID" value="AAH45509.1"/>
    <property type="molecule type" value="mRNA"/>
</dbReference>
<dbReference type="RefSeq" id="NP_956271.1">
    <property type="nucleotide sequence ID" value="NM_199977.1"/>
</dbReference>
<dbReference type="SMR" id="Q7ZVK4"/>
<dbReference type="FunCoup" id="Q7ZVK4">
    <property type="interactions" value="2541"/>
</dbReference>
<dbReference type="STRING" id="7955.ENSDARP00000074049"/>
<dbReference type="PaxDb" id="7955-ENSDARP00000074049"/>
<dbReference type="GeneID" id="335810"/>
<dbReference type="KEGG" id="dre:335810"/>
<dbReference type="AGR" id="ZFIN:ZDB-GENE-030131-7753"/>
<dbReference type="CTD" id="51028"/>
<dbReference type="ZFIN" id="ZDB-GENE-030131-7753">
    <property type="gene designation" value="vps36"/>
</dbReference>
<dbReference type="eggNOG" id="KOG2760">
    <property type="taxonomic scope" value="Eukaryota"/>
</dbReference>
<dbReference type="InParanoid" id="Q7ZVK4"/>
<dbReference type="OrthoDB" id="271448at2759"/>
<dbReference type="PhylomeDB" id="Q7ZVK4"/>
<dbReference type="Reactome" id="R-DRE-917729">
    <property type="pathway name" value="Endosomal Sorting Complex Required For Transport (ESCRT)"/>
</dbReference>
<dbReference type="PRO" id="PR:Q7ZVK4"/>
<dbReference type="Proteomes" id="UP000000437">
    <property type="component" value="Chromosome 10"/>
</dbReference>
<dbReference type="GO" id="GO:0005768">
    <property type="term" value="C:endosome"/>
    <property type="evidence" value="ECO:0000250"/>
    <property type="project" value="UniProtKB"/>
</dbReference>
<dbReference type="GO" id="GO:0000814">
    <property type="term" value="C:ESCRT II complex"/>
    <property type="evidence" value="ECO:0000318"/>
    <property type="project" value="GO_Central"/>
</dbReference>
<dbReference type="GO" id="GO:0031902">
    <property type="term" value="C:late endosome membrane"/>
    <property type="evidence" value="ECO:0000318"/>
    <property type="project" value="GO_Central"/>
</dbReference>
<dbReference type="GO" id="GO:0032266">
    <property type="term" value="F:phosphatidylinositol-3-phosphate binding"/>
    <property type="evidence" value="ECO:0007669"/>
    <property type="project" value="InterPro"/>
</dbReference>
<dbReference type="GO" id="GO:0043130">
    <property type="term" value="F:ubiquitin binding"/>
    <property type="evidence" value="ECO:0000318"/>
    <property type="project" value="GO_Central"/>
</dbReference>
<dbReference type="GO" id="GO:0043328">
    <property type="term" value="P:protein transport to vacuole involved in ubiquitin-dependent protein catabolic process via the multivesicular body sorting pathway"/>
    <property type="evidence" value="ECO:0000318"/>
    <property type="project" value="GO_Central"/>
</dbReference>
<dbReference type="CDD" id="cd13226">
    <property type="entry name" value="PH-GRAM-like_Eap45"/>
    <property type="match status" value="1"/>
</dbReference>
<dbReference type="FunFam" id="1.10.10.10:FF:000203">
    <property type="entry name" value="Vacuolar protein sorting 36 homolog"/>
    <property type="match status" value="1"/>
</dbReference>
<dbReference type="FunFam" id="2.30.29.30:FF:000241">
    <property type="entry name" value="Vacuolar protein sorting 36 homolog"/>
    <property type="match status" value="1"/>
</dbReference>
<dbReference type="FunFam" id="1.10.10.10:FF:000170">
    <property type="entry name" value="Vacuolar protein-sorting-associated protein 36"/>
    <property type="match status" value="1"/>
</dbReference>
<dbReference type="Gene3D" id="6.10.140.260">
    <property type="match status" value="1"/>
</dbReference>
<dbReference type="Gene3D" id="2.30.29.30">
    <property type="entry name" value="Pleckstrin-homology domain (PH domain)/Phosphotyrosine-binding domain (PTB)"/>
    <property type="match status" value="1"/>
</dbReference>
<dbReference type="Gene3D" id="1.10.10.10">
    <property type="entry name" value="Winged helix-like DNA-binding domain superfamily/Winged helix DNA-binding domain"/>
    <property type="match status" value="2"/>
</dbReference>
<dbReference type="InterPro" id="IPR021648">
    <property type="entry name" value="GLUE_dom"/>
</dbReference>
<dbReference type="InterPro" id="IPR011993">
    <property type="entry name" value="PH-like_dom_sf"/>
</dbReference>
<dbReference type="InterPro" id="IPR040608">
    <property type="entry name" value="Snf8/Vps36"/>
</dbReference>
<dbReference type="InterPro" id="IPR037855">
    <property type="entry name" value="Vps36"/>
</dbReference>
<dbReference type="InterPro" id="IPR036388">
    <property type="entry name" value="WH-like_DNA-bd_sf"/>
</dbReference>
<dbReference type="InterPro" id="IPR036390">
    <property type="entry name" value="WH_DNA-bd_sf"/>
</dbReference>
<dbReference type="PANTHER" id="PTHR13128">
    <property type="entry name" value="VACUOLAR PROTEIN-SORTING-ASSOCIATED PROTEIN 36"/>
    <property type="match status" value="1"/>
</dbReference>
<dbReference type="PANTHER" id="PTHR13128:SF12">
    <property type="entry name" value="VACUOLAR PROTEIN-SORTING-ASSOCIATED PROTEIN 36"/>
    <property type="match status" value="1"/>
</dbReference>
<dbReference type="Pfam" id="PF04157">
    <property type="entry name" value="EAP30"/>
    <property type="match status" value="1"/>
</dbReference>
<dbReference type="Pfam" id="PF11605">
    <property type="entry name" value="Vps36_ESCRT-II"/>
    <property type="match status" value="1"/>
</dbReference>
<dbReference type="SUPFAM" id="SSF50729">
    <property type="entry name" value="PH domain-like"/>
    <property type="match status" value="1"/>
</dbReference>
<dbReference type="SUPFAM" id="SSF46785">
    <property type="entry name" value="Winged helix' DNA-binding domain"/>
    <property type="match status" value="2"/>
</dbReference>
<dbReference type="PROSITE" id="PS51495">
    <property type="entry name" value="GLUE"/>
    <property type="match status" value="1"/>
</dbReference>
<feature type="chain" id="PRO_0000215225" description="Vacuolar protein-sorting-associated protein 36">
    <location>
        <begin position="1"/>
        <end position="382"/>
    </location>
</feature>
<feature type="domain" description="GLUE N-terminal" evidence="4">
    <location>
        <begin position="1"/>
        <end position="88"/>
    </location>
</feature>
<feature type="domain" description="GLUE C-terminal" evidence="4">
    <location>
        <begin position="105"/>
        <end position="138"/>
    </location>
</feature>
<feature type="coiled-coil region" evidence="3">
    <location>
        <begin position="160"/>
        <end position="193"/>
    </location>
</feature>
<reference key="1">
    <citation type="submission" date="2003-01" db="EMBL/GenBank/DDBJ databases">
        <authorList>
            <consortium name="NIH - Zebrafish Gene Collection (ZGC) project"/>
        </authorList>
    </citation>
    <scope>NUCLEOTIDE SEQUENCE [LARGE SCALE MRNA]</scope>
    <source>
        <strain>AB</strain>
    </source>
</reference>
<gene>
    <name type="primary">vps36</name>
    <name type="ORF">zgc:55965</name>
</gene>
<organism>
    <name type="scientific">Danio rerio</name>
    <name type="common">Zebrafish</name>
    <name type="synonym">Brachydanio rerio</name>
    <dbReference type="NCBI Taxonomy" id="7955"/>
    <lineage>
        <taxon>Eukaryota</taxon>
        <taxon>Metazoa</taxon>
        <taxon>Chordata</taxon>
        <taxon>Craniata</taxon>
        <taxon>Vertebrata</taxon>
        <taxon>Euteleostomi</taxon>
        <taxon>Actinopterygii</taxon>
        <taxon>Neopterygii</taxon>
        <taxon>Teleostei</taxon>
        <taxon>Ostariophysi</taxon>
        <taxon>Cypriniformes</taxon>
        <taxon>Danionidae</taxon>
        <taxon>Danioninae</taxon>
        <taxon>Danio</taxon>
    </lineage>
</organism>
<protein>
    <recommendedName>
        <fullName>Vacuolar protein-sorting-associated protein 36</fullName>
    </recommendedName>
    <alternativeName>
        <fullName>ESCRT-II complex subunit VPS36</fullName>
    </alternativeName>
</protein>
<sequence length="382" mass="43281">MDRFMWTNGLLEMNETLVIQQRGVRLYDGEDKAKLDVGGVVLSTHRLLWRDQKNHECCICIPLSQVIFFEEQAAGIGKSAKIVIHLHPAPENKEPGPYQHSKYSYIKLSFKEHGQIEFYRRLTEEMTQKRWENTPVSQPIPTGTGPKAGRTRAVGIVGIERKLEEKRKETDKNISEAFEDLSKLMEKAKEMVELSRSIANKIKDKQGDITEDETIRFKSYLLSMGIANPVTRETHGSGTQYHIQLAKQLGDMLQAPLEERGGMMALTEVYCLVNRARGMELLSPEDLVNACKIFESLKLPLRLRVFDSGVMVVQLQSHSEEEMIASALDNVSDKGSLTAEEFAKLLGLSVLLAKERLLLAEKMGHLCRDDSVEGLRFYPNLF</sequence>